<feature type="chain" id="PRO_0000201202" description="Acyl-coenzyme A dehydrogenase">
    <location>
        <begin position="1"/>
        <end position="814"/>
    </location>
</feature>
<feature type="active site" description="Proton acceptor" evidence="1">
    <location>
        <position position="497"/>
    </location>
</feature>
<gene>
    <name type="primary">fadE</name>
    <name type="ordered locus">STY0354</name>
    <name type="ordered locus">t2541</name>
</gene>
<evidence type="ECO:0000250" key="1">
    <source>
        <dbReference type="UniProtKB" id="P15651"/>
    </source>
</evidence>
<evidence type="ECO:0000250" key="2">
    <source>
        <dbReference type="UniProtKB" id="Q8ZRJ7"/>
    </source>
</evidence>
<evidence type="ECO:0000305" key="3"/>
<dbReference type="EC" id="1.3.8.7" evidence="2"/>
<dbReference type="EC" id="1.3.8.8" evidence="2"/>
<dbReference type="EMBL" id="AL513382">
    <property type="protein sequence ID" value="CAD08779.1"/>
    <property type="molecule type" value="Genomic_DNA"/>
</dbReference>
<dbReference type="EMBL" id="AE014613">
    <property type="protein sequence ID" value="AAO70125.1"/>
    <property type="molecule type" value="Genomic_DNA"/>
</dbReference>
<dbReference type="RefSeq" id="NP_454921.1">
    <property type="nucleotide sequence ID" value="NC_003198.1"/>
</dbReference>
<dbReference type="RefSeq" id="WP_000973055.1">
    <property type="nucleotide sequence ID" value="NZ_WSUR01000017.1"/>
</dbReference>
<dbReference type="SMR" id="Q8Z937"/>
<dbReference type="STRING" id="220341.gene:17584383"/>
<dbReference type="KEGG" id="stt:t2541"/>
<dbReference type="KEGG" id="sty:STY0354"/>
<dbReference type="PATRIC" id="fig|220341.7.peg.348"/>
<dbReference type="eggNOG" id="COG1960">
    <property type="taxonomic scope" value="Bacteria"/>
</dbReference>
<dbReference type="HOGENOM" id="CLU_012192_0_0_6"/>
<dbReference type="OMA" id="CDLANDW"/>
<dbReference type="OrthoDB" id="9802447at2"/>
<dbReference type="UniPathway" id="UPA00659"/>
<dbReference type="Proteomes" id="UP000000541">
    <property type="component" value="Chromosome"/>
</dbReference>
<dbReference type="Proteomes" id="UP000002670">
    <property type="component" value="Chromosome"/>
</dbReference>
<dbReference type="GO" id="GO:0005737">
    <property type="term" value="C:cytoplasm"/>
    <property type="evidence" value="ECO:0007669"/>
    <property type="project" value="TreeGrafter"/>
</dbReference>
<dbReference type="GO" id="GO:0050660">
    <property type="term" value="F:flavin adenine dinucleotide binding"/>
    <property type="evidence" value="ECO:0007669"/>
    <property type="project" value="InterPro"/>
</dbReference>
<dbReference type="GO" id="GO:0004466">
    <property type="term" value="F:long-chain fatty acyl-CoA dehydrogenase activity"/>
    <property type="evidence" value="ECO:0007669"/>
    <property type="project" value="UniProtKB-EC"/>
</dbReference>
<dbReference type="GO" id="GO:0070991">
    <property type="term" value="F:medium-chain fatty acyl-CoA dehydrogenase activity"/>
    <property type="evidence" value="ECO:0007669"/>
    <property type="project" value="UniProtKB-EC"/>
</dbReference>
<dbReference type="GO" id="GO:0033539">
    <property type="term" value="P:fatty acid beta-oxidation using acyl-CoA dehydrogenase"/>
    <property type="evidence" value="ECO:0007669"/>
    <property type="project" value="InterPro"/>
</dbReference>
<dbReference type="FunFam" id="1.10.540.10:FF:000004">
    <property type="entry name" value="Acyl-CoA dehydrogenase"/>
    <property type="match status" value="1"/>
</dbReference>
<dbReference type="FunFam" id="1.20.140.10:FF:000009">
    <property type="entry name" value="Acyl-CoA dehydrogenase"/>
    <property type="match status" value="1"/>
</dbReference>
<dbReference type="FunFam" id="2.40.110.10:FF:000010">
    <property type="entry name" value="Acyl-CoA dehydrogenase"/>
    <property type="match status" value="1"/>
</dbReference>
<dbReference type="Gene3D" id="1.10.540.10">
    <property type="entry name" value="Acyl-CoA dehydrogenase/oxidase, N-terminal domain"/>
    <property type="match status" value="1"/>
</dbReference>
<dbReference type="Gene3D" id="2.40.110.10">
    <property type="entry name" value="Butyryl-CoA Dehydrogenase, subunit A, domain 2"/>
    <property type="match status" value="1"/>
</dbReference>
<dbReference type="Gene3D" id="1.20.140.10">
    <property type="entry name" value="Butyryl-CoA Dehydrogenase, subunit A, domain 3"/>
    <property type="match status" value="1"/>
</dbReference>
<dbReference type="InterPro" id="IPR050741">
    <property type="entry name" value="Acyl-CoA_dehydrogenase"/>
</dbReference>
<dbReference type="InterPro" id="IPR006091">
    <property type="entry name" value="Acyl-CoA_Oxase/DH_mid-dom"/>
</dbReference>
<dbReference type="InterPro" id="IPR046373">
    <property type="entry name" value="Acyl-CoA_Oxase/DH_mid-dom_sf"/>
</dbReference>
<dbReference type="InterPro" id="IPR036250">
    <property type="entry name" value="AcylCo_DH-like_C"/>
</dbReference>
<dbReference type="InterPro" id="IPR009075">
    <property type="entry name" value="AcylCo_DH/oxidase_C"/>
</dbReference>
<dbReference type="InterPro" id="IPR013786">
    <property type="entry name" value="AcylCoA_DH/ox_N"/>
</dbReference>
<dbReference type="InterPro" id="IPR037069">
    <property type="entry name" value="AcylCoA_DH/ox_N_sf"/>
</dbReference>
<dbReference type="InterPro" id="IPR009100">
    <property type="entry name" value="AcylCoA_DH/oxidase_NM_dom_sf"/>
</dbReference>
<dbReference type="InterPro" id="IPR047634">
    <property type="entry name" value="FadE"/>
</dbReference>
<dbReference type="InterPro" id="IPR015396">
    <property type="entry name" value="FadE_C"/>
</dbReference>
<dbReference type="NCBIfam" id="NF038187">
    <property type="entry name" value="FadE_coli"/>
    <property type="match status" value="1"/>
</dbReference>
<dbReference type="NCBIfam" id="NF007000">
    <property type="entry name" value="PRK09463.1"/>
    <property type="match status" value="1"/>
</dbReference>
<dbReference type="NCBIfam" id="NF009586">
    <property type="entry name" value="PRK13026.1"/>
    <property type="match status" value="1"/>
</dbReference>
<dbReference type="PANTHER" id="PTHR48083:SF18">
    <property type="entry name" value="ACYL-COENZYME A DEHYDROGENASE"/>
    <property type="match status" value="1"/>
</dbReference>
<dbReference type="PANTHER" id="PTHR48083">
    <property type="entry name" value="MEDIUM-CHAIN SPECIFIC ACYL-COA DEHYDROGENASE, MITOCHONDRIAL-RELATED"/>
    <property type="match status" value="1"/>
</dbReference>
<dbReference type="Pfam" id="PF09317">
    <property type="entry name" value="ACDH_C"/>
    <property type="match status" value="1"/>
</dbReference>
<dbReference type="Pfam" id="PF00441">
    <property type="entry name" value="Acyl-CoA_dh_1"/>
    <property type="match status" value="1"/>
</dbReference>
<dbReference type="Pfam" id="PF02770">
    <property type="entry name" value="Acyl-CoA_dh_M"/>
    <property type="match status" value="1"/>
</dbReference>
<dbReference type="Pfam" id="PF02771">
    <property type="entry name" value="Acyl-CoA_dh_N"/>
    <property type="match status" value="1"/>
</dbReference>
<dbReference type="SUPFAM" id="SSF47203">
    <property type="entry name" value="Acyl-CoA dehydrogenase C-terminal domain-like"/>
    <property type="match status" value="1"/>
</dbReference>
<dbReference type="SUPFAM" id="SSF56645">
    <property type="entry name" value="Acyl-CoA dehydrogenase NM domain-like"/>
    <property type="match status" value="1"/>
</dbReference>
<proteinExistence type="inferred from homology"/>
<sequence length="814" mass="89274">MMILSIIATVVLLGALFYHRVSLFLSSLILLAWTAALGVAGLWSIWLLVPLAIILVPFNLTPMRKSMISAPVFRGFRKVMPPMSRTEKEAIDAGTTWWEGDLFQGKPDWKKLHNYPQPQLTAEEQAFLDGPVEEACRMANDFQITHELADLPPELWAYLKEHRFFAMIIKKEYGGLEFSAYVQSRVLQKLSGVSGILAITVGVPNSLGPGELLQHYGTEEQKNHYLPRLARGQEIPCFALTSPEAGSDAGAIPDTGVVCMGEWQGQQVLGMRLTWNKRYITLAPIATVLGLAFKLSDPDRLLGGEEELGITCALIPTSTPGVEIGRRHFPLNVPFQNGPTRGNDIFVPIDYIIGGPKMAGQGWRMLVECLSVGRGITLPSNSTGGVKSVALATGAYAHIRRQFKISIGKMEGIEEPLARIAGNAYVMDAAASLITYGIMLGEKPAVLSAIVKYHCTHRGQQSIIDAMDITGGKGIMLGESNFLARAYQGAPIAITVEGANILTRSMMIFGQGAIRCHPYVLEEMAAAQNNDVNAFDKLLFKHIGHVGSNTVRSFWLGLTRGLTSHTPTGDATKRYYQHLNRLSANLALLSDVSMAVLGGSLKRRERISTRLGDVLSQLYLASAVLKRYDDEGRHEADLPLVHWGVQDALYRAEQAMDDLLQNFPNRVVAGLLTAMIFPTGRHYLAPSDKLDHAVAKILQVPNATRSRIGRGQYLTPAEHNPVGLLEEALRDVIAADPIHQRICKELGKNLPFTRLDELARNALAKGLIDKDEAAILAKAEESRLRSINVDDFEPEALATKPVKLPEKVRKVEAA</sequence>
<keyword id="KW-0274">FAD</keyword>
<keyword id="KW-0276">Fatty acid metabolism</keyword>
<keyword id="KW-0285">Flavoprotein</keyword>
<keyword id="KW-0443">Lipid metabolism</keyword>
<keyword id="KW-0560">Oxidoreductase</keyword>
<comment type="function">
    <text evidence="2">Catalyzes the dehydrogenation of acyl-coenzymes A (acyl-CoAs) to 2-enoyl-CoAs, the first step of the beta-oxidation cycle of fatty acid degradation. Is required for the utilization of medium- and long-chain fatty acids as sole carbon sources for growth. Is needed for bacterial survival during carbone-source starvation.</text>
</comment>
<comment type="catalytic activity">
    <reaction evidence="2">
        <text>a medium-chain 2,3-saturated fatty acyl-CoA + oxidized [electron-transfer flavoprotein] + H(+) = a medium-chain (2E)-enoyl-CoA + reduced [electron-transfer flavoprotein]</text>
        <dbReference type="Rhea" id="RHEA:14477"/>
        <dbReference type="Rhea" id="RHEA-COMP:10685"/>
        <dbReference type="Rhea" id="RHEA-COMP:10686"/>
        <dbReference type="ChEBI" id="CHEBI:15378"/>
        <dbReference type="ChEBI" id="CHEBI:57692"/>
        <dbReference type="ChEBI" id="CHEBI:58307"/>
        <dbReference type="ChEBI" id="CHEBI:83723"/>
        <dbReference type="ChEBI" id="CHEBI:83726"/>
        <dbReference type="EC" id="1.3.8.7"/>
    </reaction>
</comment>
<comment type="catalytic activity">
    <reaction evidence="2">
        <text>a long-chain 2,3-saturated fatty acyl-CoA + oxidized [electron-transfer flavoprotein] + H(+) = a long-chain (2E)-enoyl-CoA + reduced [electron-transfer flavoprotein]</text>
        <dbReference type="Rhea" id="RHEA:17721"/>
        <dbReference type="Rhea" id="RHEA-COMP:10685"/>
        <dbReference type="Rhea" id="RHEA-COMP:10686"/>
        <dbReference type="ChEBI" id="CHEBI:15378"/>
        <dbReference type="ChEBI" id="CHEBI:57692"/>
        <dbReference type="ChEBI" id="CHEBI:58307"/>
        <dbReference type="ChEBI" id="CHEBI:83721"/>
        <dbReference type="ChEBI" id="CHEBI:83727"/>
        <dbReference type="EC" id="1.3.8.8"/>
    </reaction>
</comment>
<comment type="cofactor">
    <cofactor evidence="1">
        <name>FAD</name>
        <dbReference type="ChEBI" id="CHEBI:57692"/>
    </cofactor>
</comment>
<comment type="pathway">
    <text evidence="2">Lipid metabolism; fatty acid beta-oxidation.</text>
</comment>
<comment type="similarity">
    <text evidence="3">Belongs to the acyl-CoA dehydrogenase family.</text>
</comment>
<name>FADE_SALTI</name>
<protein>
    <recommendedName>
        <fullName evidence="2">Acyl-coenzyme A dehydrogenase</fullName>
        <shortName evidence="2">ACDH</shortName>
        <shortName evidence="2">Acyl-CoA dehydrogenase</shortName>
        <ecNumber evidence="2">1.3.8.7</ecNumber>
        <ecNumber evidence="2">1.3.8.8</ecNumber>
    </recommendedName>
    <alternativeName>
        <fullName evidence="2">Medium-/long-chain fatty acyl-CoA dehydrogenase</fullName>
    </alternativeName>
</protein>
<accession>Q8Z937</accession>
<organism>
    <name type="scientific">Salmonella typhi</name>
    <dbReference type="NCBI Taxonomy" id="90370"/>
    <lineage>
        <taxon>Bacteria</taxon>
        <taxon>Pseudomonadati</taxon>
        <taxon>Pseudomonadota</taxon>
        <taxon>Gammaproteobacteria</taxon>
        <taxon>Enterobacterales</taxon>
        <taxon>Enterobacteriaceae</taxon>
        <taxon>Salmonella</taxon>
    </lineage>
</organism>
<reference key="1">
    <citation type="journal article" date="2001" name="Nature">
        <title>Complete genome sequence of a multiple drug resistant Salmonella enterica serovar Typhi CT18.</title>
        <authorList>
            <person name="Parkhill J."/>
            <person name="Dougan G."/>
            <person name="James K.D."/>
            <person name="Thomson N.R."/>
            <person name="Pickard D."/>
            <person name="Wain J."/>
            <person name="Churcher C.M."/>
            <person name="Mungall K.L."/>
            <person name="Bentley S.D."/>
            <person name="Holden M.T.G."/>
            <person name="Sebaihia M."/>
            <person name="Baker S."/>
            <person name="Basham D."/>
            <person name="Brooks K."/>
            <person name="Chillingworth T."/>
            <person name="Connerton P."/>
            <person name="Cronin A."/>
            <person name="Davis P."/>
            <person name="Davies R.M."/>
            <person name="Dowd L."/>
            <person name="White N."/>
            <person name="Farrar J."/>
            <person name="Feltwell T."/>
            <person name="Hamlin N."/>
            <person name="Haque A."/>
            <person name="Hien T.T."/>
            <person name="Holroyd S."/>
            <person name="Jagels K."/>
            <person name="Krogh A."/>
            <person name="Larsen T.S."/>
            <person name="Leather S."/>
            <person name="Moule S."/>
            <person name="O'Gaora P."/>
            <person name="Parry C."/>
            <person name="Quail M.A."/>
            <person name="Rutherford K.M."/>
            <person name="Simmonds M."/>
            <person name="Skelton J."/>
            <person name="Stevens K."/>
            <person name="Whitehead S."/>
            <person name="Barrell B.G."/>
        </authorList>
    </citation>
    <scope>NUCLEOTIDE SEQUENCE [LARGE SCALE GENOMIC DNA]</scope>
    <source>
        <strain>CT18</strain>
    </source>
</reference>
<reference key="2">
    <citation type="journal article" date="2003" name="J. Bacteriol.">
        <title>Comparative genomics of Salmonella enterica serovar Typhi strains Ty2 and CT18.</title>
        <authorList>
            <person name="Deng W."/>
            <person name="Liou S.-R."/>
            <person name="Plunkett G. III"/>
            <person name="Mayhew G.F."/>
            <person name="Rose D.J."/>
            <person name="Burland V."/>
            <person name="Kodoyianni V."/>
            <person name="Schwartz D.C."/>
            <person name="Blattner F.R."/>
        </authorList>
    </citation>
    <scope>NUCLEOTIDE SEQUENCE [LARGE SCALE GENOMIC DNA]</scope>
    <source>
        <strain>ATCC 700931 / Ty2</strain>
    </source>
</reference>